<dbReference type="EMBL" id="AY074926">
    <property type="protein sequence ID" value="AAL82813.1"/>
    <property type="molecule type" value="mRNA"/>
</dbReference>
<dbReference type="EMBL" id="AB075738">
    <property type="protein sequence ID" value="BAB79226.1"/>
    <property type="molecule type" value="mRNA"/>
</dbReference>
<dbReference type="EMBL" id="AL161503">
    <property type="protein sequence ID" value="CAB81087.1"/>
    <property type="molecule type" value="Genomic_DNA"/>
</dbReference>
<dbReference type="EMBL" id="CP002687">
    <property type="protein sequence ID" value="AEE82522.1"/>
    <property type="molecule type" value="Genomic_DNA"/>
</dbReference>
<dbReference type="EMBL" id="CP002687">
    <property type="protein sequence ID" value="ANM68073.1"/>
    <property type="molecule type" value="Genomic_DNA"/>
</dbReference>
<dbReference type="EMBL" id="AY065280">
    <property type="protein sequence ID" value="AAL38756.1"/>
    <property type="molecule type" value="mRNA"/>
</dbReference>
<dbReference type="EMBL" id="AY091324">
    <property type="protein sequence ID" value="AAM14263.1"/>
    <property type="molecule type" value="mRNA"/>
</dbReference>
<dbReference type="EMBL" id="AY085707">
    <property type="protein sequence ID" value="AAM62925.1"/>
    <property type="molecule type" value="mRNA"/>
</dbReference>
<dbReference type="PIR" id="E85068">
    <property type="entry name" value="E85068"/>
</dbReference>
<dbReference type="RefSeq" id="NP_001329852.1">
    <property type="nucleotide sequence ID" value="NM_001340554.1"/>
</dbReference>
<dbReference type="RefSeq" id="NP_192454.1">
    <property type="nucleotide sequence ID" value="NM_116784.4"/>
</dbReference>
<dbReference type="SMR" id="Q9M0V0"/>
<dbReference type="BioGRID" id="11206">
    <property type="interactions" value="1"/>
</dbReference>
<dbReference type="FunCoup" id="Q9M0V0">
    <property type="interactions" value="2872"/>
</dbReference>
<dbReference type="IntAct" id="Q9M0V0">
    <property type="interactions" value="1"/>
</dbReference>
<dbReference type="STRING" id="3702.Q9M0V0"/>
<dbReference type="PaxDb" id="3702-AT4G05450.1"/>
<dbReference type="ProteomicsDB" id="250620"/>
<dbReference type="EnsemblPlants" id="AT4G05450.1">
    <property type="protein sequence ID" value="AT4G05450.1"/>
    <property type="gene ID" value="AT4G05450"/>
</dbReference>
<dbReference type="EnsemblPlants" id="AT4G05450.2">
    <property type="protein sequence ID" value="AT4G05450.2"/>
    <property type="gene ID" value="AT4G05450"/>
</dbReference>
<dbReference type="GeneID" id="825895"/>
<dbReference type="Gramene" id="AT4G05450.1">
    <property type="protein sequence ID" value="AT4G05450.1"/>
    <property type="gene ID" value="AT4G05450"/>
</dbReference>
<dbReference type="Gramene" id="AT4G05450.2">
    <property type="protein sequence ID" value="AT4G05450.2"/>
    <property type="gene ID" value="AT4G05450"/>
</dbReference>
<dbReference type="KEGG" id="ath:AT4G05450"/>
<dbReference type="Araport" id="AT4G05450"/>
<dbReference type="TAIR" id="AT4G05450">
    <property type="gene designation" value="MFDX1"/>
</dbReference>
<dbReference type="eggNOG" id="KOG3309">
    <property type="taxonomic scope" value="Eukaryota"/>
</dbReference>
<dbReference type="HOGENOM" id="CLU_082632_0_0_1"/>
<dbReference type="InParanoid" id="Q9M0V0"/>
<dbReference type="OMA" id="VVMGYEG"/>
<dbReference type="PhylomeDB" id="Q9M0V0"/>
<dbReference type="BioCyc" id="ARA:AT4G05450-MONOMER"/>
<dbReference type="BRENDA" id="2.8.1.6">
    <property type="organism ID" value="399"/>
</dbReference>
<dbReference type="SABIO-RK" id="Q9M0V0"/>
<dbReference type="PRO" id="PR:Q9M0V0"/>
<dbReference type="Proteomes" id="UP000006548">
    <property type="component" value="Chromosome 4"/>
</dbReference>
<dbReference type="ExpressionAtlas" id="Q9M0V0">
    <property type="expression patterns" value="baseline and differential"/>
</dbReference>
<dbReference type="GO" id="GO:0005829">
    <property type="term" value="C:cytosol"/>
    <property type="evidence" value="ECO:0007005"/>
    <property type="project" value="TAIR"/>
</dbReference>
<dbReference type="GO" id="GO:0005759">
    <property type="term" value="C:mitochondrial matrix"/>
    <property type="evidence" value="ECO:0007669"/>
    <property type="project" value="UniProtKB-SubCell"/>
</dbReference>
<dbReference type="GO" id="GO:0005739">
    <property type="term" value="C:mitochondrion"/>
    <property type="evidence" value="ECO:0000314"/>
    <property type="project" value="UniProtKB"/>
</dbReference>
<dbReference type="GO" id="GO:0051537">
    <property type="term" value="F:2 iron, 2 sulfur cluster binding"/>
    <property type="evidence" value="ECO:0007669"/>
    <property type="project" value="UniProtKB-KW"/>
</dbReference>
<dbReference type="GO" id="GO:0046872">
    <property type="term" value="F:metal ion binding"/>
    <property type="evidence" value="ECO:0007669"/>
    <property type="project" value="UniProtKB-KW"/>
</dbReference>
<dbReference type="GO" id="GO:0009102">
    <property type="term" value="P:biotin biosynthetic process"/>
    <property type="evidence" value="ECO:0007669"/>
    <property type="project" value="UniProtKB-KW"/>
</dbReference>
<dbReference type="GO" id="GO:0022900">
    <property type="term" value="P:electron transport chain"/>
    <property type="evidence" value="ECO:0000314"/>
    <property type="project" value="UniProtKB"/>
</dbReference>
<dbReference type="GO" id="GO:0140647">
    <property type="term" value="P:P450-containing electron transport chain"/>
    <property type="evidence" value="ECO:0007669"/>
    <property type="project" value="InterPro"/>
</dbReference>
<dbReference type="GO" id="GO:0048868">
    <property type="term" value="P:pollen tube development"/>
    <property type="evidence" value="ECO:0000315"/>
    <property type="project" value="TAIR"/>
</dbReference>
<dbReference type="CDD" id="cd00207">
    <property type="entry name" value="fer2"/>
    <property type="match status" value="1"/>
</dbReference>
<dbReference type="FunFam" id="3.10.20.30:FF:000066">
    <property type="entry name" value="Adrenodoxin-like protein 1, mitochondrial"/>
    <property type="match status" value="1"/>
</dbReference>
<dbReference type="Gene3D" id="3.10.20.30">
    <property type="match status" value="1"/>
</dbReference>
<dbReference type="InterPro" id="IPR036010">
    <property type="entry name" value="2Fe-2S_ferredoxin-like_sf"/>
</dbReference>
<dbReference type="InterPro" id="IPR001041">
    <property type="entry name" value="2Fe-2S_ferredoxin-type"/>
</dbReference>
<dbReference type="InterPro" id="IPR001055">
    <property type="entry name" value="Adrenodoxin-like"/>
</dbReference>
<dbReference type="InterPro" id="IPR018298">
    <property type="entry name" value="Adrenodoxin_Fe-S_BS"/>
</dbReference>
<dbReference type="InterPro" id="IPR012675">
    <property type="entry name" value="Beta-grasp_dom_sf"/>
</dbReference>
<dbReference type="PANTHER" id="PTHR23426:SF34">
    <property type="entry name" value="ADRENODOXIN-LIKE PROTEIN 1, MITOCHONDRIAL-RELATED"/>
    <property type="match status" value="1"/>
</dbReference>
<dbReference type="PANTHER" id="PTHR23426">
    <property type="entry name" value="FERREDOXIN/ADRENODOXIN"/>
    <property type="match status" value="1"/>
</dbReference>
<dbReference type="Pfam" id="PF00111">
    <property type="entry name" value="Fer2"/>
    <property type="match status" value="1"/>
</dbReference>
<dbReference type="PRINTS" id="PR00355">
    <property type="entry name" value="ADRENODOXIN"/>
</dbReference>
<dbReference type="SUPFAM" id="SSF54292">
    <property type="entry name" value="2Fe-2S ferredoxin-like"/>
    <property type="match status" value="1"/>
</dbReference>
<dbReference type="PROSITE" id="PS51085">
    <property type="entry name" value="2FE2S_FER_2"/>
    <property type="match status" value="1"/>
</dbReference>
<dbReference type="PROSITE" id="PS00814">
    <property type="entry name" value="ADX"/>
    <property type="match status" value="1"/>
</dbReference>
<comment type="function">
    <text evidence="3 4">Associates in vitro with the adrenodoxin reductase MFDR to form an efficient low potential electron transfer chain that is able to reduce cytochrome C (PubMed:12714594, PubMed:13677469). Functions as accessory mitochondrial protein involved with BIO2 in the plant biotin synthase reaction (PubMed:12714594).</text>
</comment>
<comment type="cofactor">
    <cofactor evidence="7">
        <name>[2Fe-2S] cluster</name>
        <dbReference type="ChEBI" id="CHEBI:190135"/>
    </cofactor>
    <text evidence="7">Binds 1 [2Fe-2S] cluster.</text>
</comment>
<comment type="interaction">
    <interactant intactId="EBI-25517302">
        <id>Q9M0V0</id>
    </interactant>
    <interactant intactId="EBI-15193683">
        <id>Q5CCK4</id>
        <label>VAL2</label>
    </interactant>
    <organismsDiffer>false</organismsDiffer>
    <experiments>3</experiments>
</comment>
<comment type="subcellular location">
    <subcellularLocation>
        <location evidence="3 4">Mitochondrion matrix</location>
    </subcellularLocation>
</comment>
<comment type="similarity">
    <text evidence="7">Belongs to the adrenodoxin/putidaredoxin family.</text>
</comment>
<feature type="transit peptide" description="Mitochondrion" evidence="1">
    <location>
        <begin position="1"/>
        <end position="35"/>
    </location>
</feature>
<feature type="chain" id="PRO_0000430542" description="Adrenodoxin-like protein 1, mitochondrial">
    <location>
        <begin position="36"/>
        <end position="197"/>
    </location>
</feature>
<feature type="domain" description="2Fe-2S ferredoxin-type" evidence="2">
    <location>
        <begin position="79"/>
        <end position="184"/>
    </location>
</feature>
<feature type="binding site" evidence="2">
    <location>
        <position position="118"/>
    </location>
    <ligand>
        <name>[2Fe-2S] cluster</name>
        <dbReference type="ChEBI" id="CHEBI:190135"/>
    </ligand>
</feature>
<feature type="binding site" evidence="2">
    <location>
        <position position="124"/>
    </location>
    <ligand>
        <name>[2Fe-2S] cluster</name>
        <dbReference type="ChEBI" id="CHEBI:190135"/>
    </ligand>
</feature>
<feature type="binding site" evidence="2">
    <location>
        <position position="127"/>
    </location>
    <ligand>
        <name>[2Fe-2S] cluster</name>
        <dbReference type="ChEBI" id="CHEBI:190135"/>
    </ligand>
</feature>
<feature type="binding site" evidence="2">
    <location>
        <position position="165"/>
    </location>
    <ligand>
        <name>[2Fe-2S] cluster</name>
        <dbReference type="ChEBI" id="CHEBI:190135"/>
    </ligand>
</feature>
<feature type="sequence conflict" description="In Ref. 6; AAM62925." ref="6">
    <original>D</original>
    <variation>H</variation>
    <location>
        <position position="133"/>
    </location>
</feature>
<protein>
    <recommendedName>
        <fullName evidence="5">Adrenodoxin-like protein 1, mitochondrial</fullName>
    </recommendedName>
    <alternativeName>
        <fullName evidence="6">Mitochondrial ferredoxin 1</fullName>
        <shortName evidence="6">AtMFDX1</shortName>
    </alternativeName>
</protein>
<organism>
    <name type="scientific">Arabidopsis thaliana</name>
    <name type="common">Mouse-ear cress</name>
    <dbReference type="NCBI Taxonomy" id="3702"/>
    <lineage>
        <taxon>Eukaryota</taxon>
        <taxon>Viridiplantae</taxon>
        <taxon>Streptophyta</taxon>
        <taxon>Embryophyta</taxon>
        <taxon>Tracheophyta</taxon>
        <taxon>Spermatophyta</taxon>
        <taxon>Magnoliopsida</taxon>
        <taxon>eudicotyledons</taxon>
        <taxon>Gunneridae</taxon>
        <taxon>Pentapetalae</taxon>
        <taxon>rosids</taxon>
        <taxon>malvids</taxon>
        <taxon>Brassicales</taxon>
        <taxon>Brassicaceae</taxon>
        <taxon>Camelineae</taxon>
        <taxon>Arabidopsis</taxon>
    </lineage>
</organism>
<sequence>MIGHRISRLGSTIVKQLAREGYLATYGTKNLHRSYGHYLQSLPVVPRQARTSQEAWFLKSHKFCTSSTTSSENGDEETEKITIIFVDKDGEEIPVKVPIGMSVLEAAHENDIDLEGACEASLACSTCHVIVMDTEYYNKLEEPTDEENDMLDLAFGLTETSRLGCQVIARPELDGVRLAIPSATRNFAVDGFVPKPH</sequence>
<proteinExistence type="evidence at protein level"/>
<keyword id="KW-0001">2Fe-2S</keyword>
<keyword id="KW-0093">Biotin biosynthesis</keyword>
<keyword id="KW-0249">Electron transport</keyword>
<keyword id="KW-0408">Iron</keyword>
<keyword id="KW-0411">Iron-sulfur</keyword>
<keyword id="KW-0479">Metal-binding</keyword>
<keyword id="KW-0496">Mitochondrion</keyword>
<keyword id="KW-1185">Reference proteome</keyword>
<keyword id="KW-0809">Transit peptide</keyword>
<keyword id="KW-0813">Transport</keyword>
<reference key="1">
    <citation type="journal article" date="2003" name="J. Biol. Chem.">
        <title>The plant biotin synthase reaction. Identification and characterization of essential mitochondrial accessory protein components.</title>
        <authorList>
            <person name="Picciocchi A."/>
            <person name="Douce R."/>
            <person name="Alban C."/>
        </authorList>
    </citation>
    <scope>NUCLEOTIDE SEQUENCE [MRNA]</scope>
    <scope>IDENTIFICATION BY MASS SPECTROMETRY</scope>
    <scope>FUNCTION</scope>
    <scope>SUBCELLULAR LOCATION</scope>
    <source>
        <strain>cv. Columbia</strain>
    </source>
</reference>
<reference key="2">
    <citation type="journal article" date="2003" name="Plant Mol. Biol.">
        <title>Identification and molecular characterization of mitochondrial ferredoxins and ferredoxin reductase from Arabidopsis.</title>
        <authorList>
            <person name="Takubo K."/>
            <person name="Morikawa T."/>
            <person name="Nonaka Y."/>
            <person name="Mizutani M."/>
            <person name="Takenaka S."/>
            <person name="Takabe K."/>
            <person name="Takahashi M.A."/>
            <person name="Ohta D."/>
        </authorList>
    </citation>
    <scope>NUCLEOTIDE SEQUENCE [MRNA]</scope>
    <scope>FUNCTION</scope>
    <scope>SUBCELLULAR LOCATION</scope>
    <source>
        <strain>cv. Columbia</strain>
    </source>
</reference>
<reference key="3">
    <citation type="journal article" date="1999" name="Nature">
        <title>Sequence and analysis of chromosome 4 of the plant Arabidopsis thaliana.</title>
        <authorList>
            <person name="Mayer K.F.X."/>
            <person name="Schueller C."/>
            <person name="Wambutt R."/>
            <person name="Murphy G."/>
            <person name="Volckaert G."/>
            <person name="Pohl T."/>
            <person name="Duesterhoeft A."/>
            <person name="Stiekema W."/>
            <person name="Entian K.-D."/>
            <person name="Terryn N."/>
            <person name="Harris B."/>
            <person name="Ansorge W."/>
            <person name="Brandt P."/>
            <person name="Grivell L.A."/>
            <person name="Rieger M."/>
            <person name="Weichselgartner M."/>
            <person name="de Simone V."/>
            <person name="Obermaier B."/>
            <person name="Mache R."/>
            <person name="Mueller M."/>
            <person name="Kreis M."/>
            <person name="Delseny M."/>
            <person name="Puigdomenech P."/>
            <person name="Watson M."/>
            <person name="Schmidtheini T."/>
            <person name="Reichert B."/>
            <person name="Portetelle D."/>
            <person name="Perez-Alonso M."/>
            <person name="Boutry M."/>
            <person name="Bancroft I."/>
            <person name="Vos P."/>
            <person name="Hoheisel J."/>
            <person name="Zimmermann W."/>
            <person name="Wedler H."/>
            <person name="Ridley P."/>
            <person name="Langham S.-A."/>
            <person name="McCullagh B."/>
            <person name="Bilham L."/>
            <person name="Robben J."/>
            <person name="van der Schueren J."/>
            <person name="Grymonprez B."/>
            <person name="Chuang Y.-J."/>
            <person name="Vandenbussche F."/>
            <person name="Braeken M."/>
            <person name="Weltjens I."/>
            <person name="Voet M."/>
            <person name="Bastiaens I."/>
            <person name="Aert R."/>
            <person name="Defoor E."/>
            <person name="Weitzenegger T."/>
            <person name="Bothe G."/>
            <person name="Ramsperger U."/>
            <person name="Hilbert H."/>
            <person name="Braun M."/>
            <person name="Holzer E."/>
            <person name="Brandt A."/>
            <person name="Peters S."/>
            <person name="van Staveren M."/>
            <person name="Dirkse W."/>
            <person name="Mooijman P."/>
            <person name="Klein Lankhorst R."/>
            <person name="Rose M."/>
            <person name="Hauf J."/>
            <person name="Koetter P."/>
            <person name="Berneiser S."/>
            <person name="Hempel S."/>
            <person name="Feldpausch M."/>
            <person name="Lamberth S."/>
            <person name="Van den Daele H."/>
            <person name="De Keyser A."/>
            <person name="Buysshaert C."/>
            <person name="Gielen J."/>
            <person name="Villarroel R."/>
            <person name="De Clercq R."/>
            <person name="van Montagu M."/>
            <person name="Rogers J."/>
            <person name="Cronin A."/>
            <person name="Quail M.A."/>
            <person name="Bray-Allen S."/>
            <person name="Clark L."/>
            <person name="Doggett J."/>
            <person name="Hall S."/>
            <person name="Kay M."/>
            <person name="Lennard N."/>
            <person name="McLay K."/>
            <person name="Mayes R."/>
            <person name="Pettett A."/>
            <person name="Rajandream M.A."/>
            <person name="Lyne M."/>
            <person name="Benes V."/>
            <person name="Rechmann S."/>
            <person name="Borkova D."/>
            <person name="Bloecker H."/>
            <person name="Scharfe M."/>
            <person name="Grimm M."/>
            <person name="Loehnert T.-H."/>
            <person name="Dose S."/>
            <person name="de Haan M."/>
            <person name="Maarse A.C."/>
            <person name="Schaefer M."/>
            <person name="Mueller-Auer S."/>
            <person name="Gabel C."/>
            <person name="Fuchs M."/>
            <person name="Fartmann B."/>
            <person name="Granderath K."/>
            <person name="Dauner D."/>
            <person name="Herzl A."/>
            <person name="Neumann S."/>
            <person name="Argiriou A."/>
            <person name="Vitale D."/>
            <person name="Liguori R."/>
            <person name="Piravandi E."/>
            <person name="Massenet O."/>
            <person name="Quigley F."/>
            <person name="Clabauld G."/>
            <person name="Muendlein A."/>
            <person name="Felber R."/>
            <person name="Schnabl S."/>
            <person name="Hiller R."/>
            <person name="Schmidt W."/>
            <person name="Lecharny A."/>
            <person name="Aubourg S."/>
            <person name="Chefdor F."/>
            <person name="Cooke R."/>
            <person name="Berger C."/>
            <person name="Monfort A."/>
            <person name="Casacuberta E."/>
            <person name="Gibbons T."/>
            <person name="Weber N."/>
            <person name="Vandenbol M."/>
            <person name="Bargues M."/>
            <person name="Terol J."/>
            <person name="Torres A."/>
            <person name="Perez-Perez A."/>
            <person name="Purnelle B."/>
            <person name="Bent E."/>
            <person name="Johnson S."/>
            <person name="Tacon D."/>
            <person name="Jesse T."/>
            <person name="Heijnen L."/>
            <person name="Schwarz S."/>
            <person name="Scholler P."/>
            <person name="Heber S."/>
            <person name="Francs P."/>
            <person name="Bielke C."/>
            <person name="Frishman D."/>
            <person name="Haase D."/>
            <person name="Lemcke K."/>
            <person name="Mewes H.-W."/>
            <person name="Stocker S."/>
            <person name="Zaccaria P."/>
            <person name="Bevan M."/>
            <person name="Wilson R.K."/>
            <person name="de la Bastide M."/>
            <person name="Habermann K."/>
            <person name="Parnell L."/>
            <person name="Dedhia N."/>
            <person name="Gnoj L."/>
            <person name="Schutz K."/>
            <person name="Huang E."/>
            <person name="Spiegel L."/>
            <person name="Sekhon M."/>
            <person name="Murray J."/>
            <person name="Sheet P."/>
            <person name="Cordes M."/>
            <person name="Abu-Threideh J."/>
            <person name="Stoneking T."/>
            <person name="Kalicki J."/>
            <person name="Graves T."/>
            <person name="Harmon G."/>
            <person name="Edwards J."/>
            <person name="Latreille P."/>
            <person name="Courtney L."/>
            <person name="Cloud J."/>
            <person name="Abbott A."/>
            <person name="Scott K."/>
            <person name="Johnson D."/>
            <person name="Minx P."/>
            <person name="Bentley D."/>
            <person name="Fulton B."/>
            <person name="Miller N."/>
            <person name="Greco T."/>
            <person name="Kemp K."/>
            <person name="Kramer J."/>
            <person name="Fulton L."/>
            <person name="Mardis E."/>
            <person name="Dante M."/>
            <person name="Pepin K."/>
            <person name="Hillier L.W."/>
            <person name="Nelson J."/>
            <person name="Spieth J."/>
            <person name="Ryan E."/>
            <person name="Andrews S."/>
            <person name="Geisel C."/>
            <person name="Layman D."/>
            <person name="Du H."/>
            <person name="Ali J."/>
            <person name="Berghoff A."/>
            <person name="Jones K."/>
            <person name="Drone K."/>
            <person name="Cotton M."/>
            <person name="Joshu C."/>
            <person name="Antonoiu B."/>
            <person name="Zidanic M."/>
            <person name="Strong C."/>
            <person name="Sun H."/>
            <person name="Lamar B."/>
            <person name="Yordan C."/>
            <person name="Ma P."/>
            <person name="Zhong J."/>
            <person name="Preston R."/>
            <person name="Vil D."/>
            <person name="Shekher M."/>
            <person name="Matero A."/>
            <person name="Shah R."/>
            <person name="Swaby I.K."/>
            <person name="O'Shaughnessy A."/>
            <person name="Rodriguez M."/>
            <person name="Hoffman J."/>
            <person name="Till S."/>
            <person name="Granat S."/>
            <person name="Shohdy N."/>
            <person name="Hasegawa A."/>
            <person name="Hameed A."/>
            <person name="Lodhi M."/>
            <person name="Johnson A."/>
            <person name="Chen E."/>
            <person name="Marra M.A."/>
            <person name="Martienssen R."/>
            <person name="McCombie W.R."/>
        </authorList>
    </citation>
    <scope>NUCLEOTIDE SEQUENCE [LARGE SCALE GENOMIC DNA]</scope>
    <source>
        <strain>cv. Columbia</strain>
    </source>
</reference>
<reference key="4">
    <citation type="journal article" date="2017" name="Plant J.">
        <title>Araport11: a complete reannotation of the Arabidopsis thaliana reference genome.</title>
        <authorList>
            <person name="Cheng C.Y."/>
            <person name="Krishnakumar V."/>
            <person name="Chan A.P."/>
            <person name="Thibaud-Nissen F."/>
            <person name="Schobel S."/>
            <person name="Town C.D."/>
        </authorList>
    </citation>
    <scope>GENOME REANNOTATION</scope>
    <source>
        <strain>cv. Columbia</strain>
    </source>
</reference>
<reference key="5">
    <citation type="journal article" date="2003" name="Science">
        <title>Empirical analysis of transcriptional activity in the Arabidopsis genome.</title>
        <authorList>
            <person name="Yamada K."/>
            <person name="Lim J."/>
            <person name="Dale J.M."/>
            <person name="Chen H."/>
            <person name="Shinn P."/>
            <person name="Palm C.J."/>
            <person name="Southwick A.M."/>
            <person name="Wu H.C."/>
            <person name="Kim C.J."/>
            <person name="Nguyen M."/>
            <person name="Pham P.K."/>
            <person name="Cheuk R.F."/>
            <person name="Karlin-Newmann G."/>
            <person name="Liu S.X."/>
            <person name="Lam B."/>
            <person name="Sakano H."/>
            <person name="Wu T."/>
            <person name="Yu G."/>
            <person name="Miranda M."/>
            <person name="Quach H.L."/>
            <person name="Tripp M."/>
            <person name="Chang C.H."/>
            <person name="Lee J.M."/>
            <person name="Toriumi M.J."/>
            <person name="Chan M.M."/>
            <person name="Tang C.C."/>
            <person name="Onodera C.S."/>
            <person name="Deng J.M."/>
            <person name="Akiyama K."/>
            <person name="Ansari Y."/>
            <person name="Arakawa T."/>
            <person name="Banh J."/>
            <person name="Banno F."/>
            <person name="Bowser L."/>
            <person name="Brooks S.Y."/>
            <person name="Carninci P."/>
            <person name="Chao Q."/>
            <person name="Choy N."/>
            <person name="Enju A."/>
            <person name="Goldsmith A.D."/>
            <person name="Gurjal M."/>
            <person name="Hansen N.F."/>
            <person name="Hayashizaki Y."/>
            <person name="Johnson-Hopson C."/>
            <person name="Hsuan V.W."/>
            <person name="Iida K."/>
            <person name="Karnes M."/>
            <person name="Khan S."/>
            <person name="Koesema E."/>
            <person name="Ishida J."/>
            <person name="Jiang P.X."/>
            <person name="Jones T."/>
            <person name="Kawai J."/>
            <person name="Kamiya A."/>
            <person name="Meyers C."/>
            <person name="Nakajima M."/>
            <person name="Narusaka M."/>
            <person name="Seki M."/>
            <person name="Sakurai T."/>
            <person name="Satou M."/>
            <person name="Tamse R."/>
            <person name="Vaysberg M."/>
            <person name="Wallender E.K."/>
            <person name="Wong C."/>
            <person name="Yamamura Y."/>
            <person name="Yuan S."/>
            <person name="Shinozaki K."/>
            <person name="Davis R.W."/>
            <person name="Theologis A."/>
            <person name="Ecker J.R."/>
        </authorList>
    </citation>
    <scope>NUCLEOTIDE SEQUENCE [LARGE SCALE MRNA]</scope>
    <source>
        <strain>cv. Columbia</strain>
    </source>
</reference>
<reference key="6">
    <citation type="submission" date="2002-03" db="EMBL/GenBank/DDBJ databases">
        <title>Full-length cDNA from Arabidopsis thaliana.</title>
        <authorList>
            <person name="Brover V.V."/>
            <person name="Troukhan M.E."/>
            <person name="Alexandrov N.A."/>
            <person name="Lu Y.-P."/>
            <person name="Flavell R.B."/>
            <person name="Feldmann K.A."/>
        </authorList>
    </citation>
    <scope>NUCLEOTIDE SEQUENCE [LARGE SCALE MRNA]</scope>
</reference>
<gene>
    <name evidence="6" type="primary">MFDX1</name>
    <name evidence="5" type="synonym">ADX1</name>
    <name evidence="8" type="ordered locus">At4g05450</name>
    <name type="ORF">C6L9.130</name>
</gene>
<evidence type="ECO:0000255" key="1"/>
<evidence type="ECO:0000255" key="2">
    <source>
        <dbReference type="PROSITE-ProRule" id="PRU00465"/>
    </source>
</evidence>
<evidence type="ECO:0000269" key="3">
    <source>
    </source>
</evidence>
<evidence type="ECO:0000269" key="4">
    <source>
    </source>
</evidence>
<evidence type="ECO:0000303" key="5">
    <source>
    </source>
</evidence>
<evidence type="ECO:0000303" key="6">
    <source>
    </source>
</evidence>
<evidence type="ECO:0000305" key="7"/>
<evidence type="ECO:0000312" key="8">
    <source>
        <dbReference type="Araport" id="AT4G05450"/>
    </source>
</evidence>
<accession>Q9M0V0</accession>
<accession>Q8LDZ8</accession>
<name>MFDX1_ARATH</name>